<reference key="1">
    <citation type="journal article" date="2002" name="Proc. Natl. Acad. Sci. U.S.A.">
        <title>Complete genome sequence and comparative genomic analysis of an emerging human pathogen, serotype V Streptococcus agalactiae.</title>
        <authorList>
            <person name="Tettelin H."/>
            <person name="Masignani V."/>
            <person name="Cieslewicz M.J."/>
            <person name="Eisen J.A."/>
            <person name="Peterson S.N."/>
            <person name="Wessels M.R."/>
            <person name="Paulsen I.T."/>
            <person name="Nelson K.E."/>
            <person name="Margarit I."/>
            <person name="Read T.D."/>
            <person name="Madoff L.C."/>
            <person name="Wolf A.M."/>
            <person name="Beanan M.J."/>
            <person name="Brinkac L.M."/>
            <person name="Daugherty S.C."/>
            <person name="DeBoy R.T."/>
            <person name="Durkin A.S."/>
            <person name="Kolonay J.F."/>
            <person name="Madupu R."/>
            <person name="Lewis M.R."/>
            <person name="Radune D."/>
            <person name="Fedorova N.B."/>
            <person name="Scanlan D."/>
            <person name="Khouri H.M."/>
            <person name="Mulligan S."/>
            <person name="Carty H.A."/>
            <person name="Cline R.T."/>
            <person name="Van Aken S.E."/>
            <person name="Gill J."/>
            <person name="Scarselli M."/>
            <person name="Mora M."/>
            <person name="Iacobini E.T."/>
            <person name="Brettoni C."/>
            <person name="Galli G."/>
            <person name="Mariani M."/>
            <person name="Vegni F."/>
            <person name="Maione D."/>
            <person name="Rinaudo D."/>
            <person name="Rappuoli R."/>
            <person name="Telford J.L."/>
            <person name="Kasper D.L."/>
            <person name="Grandi G."/>
            <person name="Fraser C.M."/>
        </authorList>
    </citation>
    <scope>NUCLEOTIDE SEQUENCE [LARGE SCALE GENOMIC DNA]</scope>
    <source>
        <strain>ATCC BAA-611 / 2603 V/R</strain>
    </source>
</reference>
<accession>Q8DYJ2</accession>
<protein>
    <recommendedName>
        <fullName evidence="1">Dephospho-CoA kinase</fullName>
        <ecNumber evidence="1">2.7.1.24</ecNumber>
    </recommendedName>
    <alternativeName>
        <fullName evidence="1">Dephosphocoenzyme A kinase</fullName>
    </alternativeName>
</protein>
<evidence type="ECO:0000255" key="1">
    <source>
        <dbReference type="HAMAP-Rule" id="MF_00376"/>
    </source>
</evidence>
<name>COAE_STRA5</name>
<organism>
    <name type="scientific">Streptococcus agalactiae serotype V (strain ATCC BAA-611 / 2603 V/R)</name>
    <dbReference type="NCBI Taxonomy" id="208435"/>
    <lineage>
        <taxon>Bacteria</taxon>
        <taxon>Bacillati</taxon>
        <taxon>Bacillota</taxon>
        <taxon>Bacilli</taxon>
        <taxon>Lactobacillales</taxon>
        <taxon>Streptococcaceae</taxon>
        <taxon>Streptococcus</taxon>
    </lineage>
</organism>
<feature type="chain" id="PRO_0000173008" description="Dephospho-CoA kinase">
    <location>
        <begin position="1"/>
        <end position="195"/>
    </location>
</feature>
<feature type="domain" description="DPCK" evidence="1">
    <location>
        <begin position="4"/>
        <end position="195"/>
    </location>
</feature>
<feature type="binding site" evidence="1">
    <location>
        <begin position="12"/>
        <end position="17"/>
    </location>
    <ligand>
        <name>ATP</name>
        <dbReference type="ChEBI" id="CHEBI:30616"/>
    </ligand>
</feature>
<dbReference type="EC" id="2.7.1.24" evidence="1"/>
<dbReference type="EMBL" id="AE009948">
    <property type="protein sequence ID" value="AAN00355.1"/>
    <property type="molecule type" value="Genomic_DNA"/>
</dbReference>
<dbReference type="RefSeq" id="NP_688482.1">
    <property type="nucleotide sequence ID" value="NC_004116.1"/>
</dbReference>
<dbReference type="SMR" id="Q8DYJ2"/>
<dbReference type="STRING" id="208435.SAG1488"/>
<dbReference type="KEGG" id="sag:SAG1488"/>
<dbReference type="PATRIC" id="fig|208435.3.peg.1498"/>
<dbReference type="HOGENOM" id="CLU_057180_0_0_9"/>
<dbReference type="OrthoDB" id="9812943at2"/>
<dbReference type="UniPathway" id="UPA00241">
    <property type="reaction ID" value="UER00356"/>
</dbReference>
<dbReference type="Proteomes" id="UP000000821">
    <property type="component" value="Chromosome"/>
</dbReference>
<dbReference type="GO" id="GO:0005737">
    <property type="term" value="C:cytoplasm"/>
    <property type="evidence" value="ECO:0007669"/>
    <property type="project" value="UniProtKB-SubCell"/>
</dbReference>
<dbReference type="GO" id="GO:0005524">
    <property type="term" value="F:ATP binding"/>
    <property type="evidence" value="ECO:0007669"/>
    <property type="project" value="UniProtKB-UniRule"/>
</dbReference>
<dbReference type="GO" id="GO:0004140">
    <property type="term" value="F:dephospho-CoA kinase activity"/>
    <property type="evidence" value="ECO:0007669"/>
    <property type="project" value="UniProtKB-UniRule"/>
</dbReference>
<dbReference type="GO" id="GO:0015937">
    <property type="term" value="P:coenzyme A biosynthetic process"/>
    <property type="evidence" value="ECO:0007669"/>
    <property type="project" value="UniProtKB-UniRule"/>
</dbReference>
<dbReference type="CDD" id="cd02022">
    <property type="entry name" value="DPCK"/>
    <property type="match status" value="1"/>
</dbReference>
<dbReference type="FunFam" id="3.40.50.300:FF:000991">
    <property type="entry name" value="Dephospho-CoA kinase"/>
    <property type="match status" value="1"/>
</dbReference>
<dbReference type="Gene3D" id="3.40.50.300">
    <property type="entry name" value="P-loop containing nucleotide triphosphate hydrolases"/>
    <property type="match status" value="1"/>
</dbReference>
<dbReference type="HAMAP" id="MF_00376">
    <property type="entry name" value="Dephospho_CoA_kinase"/>
    <property type="match status" value="1"/>
</dbReference>
<dbReference type="InterPro" id="IPR001977">
    <property type="entry name" value="Depp_CoAkinase"/>
</dbReference>
<dbReference type="InterPro" id="IPR027417">
    <property type="entry name" value="P-loop_NTPase"/>
</dbReference>
<dbReference type="NCBIfam" id="TIGR00152">
    <property type="entry name" value="dephospho-CoA kinase"/>
    <property type="match status" value="1"/>
</dbReference>
<dbReference type="PANTHER" id="PTHR10695:SF46">
    <property type="entry name" value="BIFUNCTIONAL COENZYME A SYNTHASE-RELATED"/>
    <property type="match status" value="1"/>
</dbReference>
<dbReference type="PANTHER" id="PTHR10695">
    <property type="entry name" value="DEPHOSPHO-COA KINASE-RELATED"/>
    <property type="match status" value="1"/>
</dbReference>
<dbReference type="Pfam" id="PF01121">
    <property type="entry name" value="CoaE"/>
    <property type="match status" value="1"/>
</dbReference>
<dbReference type="SUPFAM" id="SSF52540">
    <property type="entry name" value="P-loop containing nucleoside triphosphate hydrolases"/>
    <property type="match status" value="1"/>
</dbReference>
<dbReference type="PROSITE" id="PS51219">
    <property type="entry name" value="DPCK"/>
    <property type="match status" value="1"/>
</dbReference>
<gene>
    <name evidence="1" type="primary">coaE</name>
    <name type="ordered locus">SAG1488</name>
</gene>
<sequence>MTKIIGLTGGIASGKSTVTKIIRESGFKVIDADQVVHKLQAKGGKLYQALLEWLGPEILDADGELDRPKLSQMIFANPDNMKTSARLQNSIIRQELACQRDQLKQTEEIFFMDIPLLIEEKYIKWFDEIWLVFVDKEKQLQRLMARNNYSREEAELRLSHQMPLTDKKSFASLIIDNNGDLITLKEQILDALQRL</sequence>
<proteinExistence type="inferred from homology"/>
<comment type="function">
    <text evidence="1">Catalyzes the phosphorylation of the 3'-hydroxyl group of dephosphocoenzyme A to form coenzyme A.</text>
</comment>
<comment type="catalytic activity">
    <reaction evidence="1">
        <text>3'-dephospho-CoA + ATP = ADP + CoA + H(+)</text>
        <dbReference type="Rhea" id="RHEA:18245"/>
        <dbReference type="ChEBI" id="CHEBI:15378"/>
        <dbReference type="ChEBI" id="CHEBI:30616"/>
        <dbReference type="ChEBI" id="CHEBI:57287"/>
        <dbReference type="ChEBI" id="CHEBI:57328"/>
        <dbReference type="ChEBI" id="CHEBI:456216"/>
        <dbReference type="EC" id="2.7.1.24"/>
    </reaction>
</comment>
<comment type="pathway">
    <text evidence="1">Cofactor biosynthesis; coenzyme A biosynthesis; CoA from (R)-pantothenate: step 5/5.</text>
</comment>
<comment type="subcellular location">
    <subcellularLocation>
        <location evidence="1">Cytoplasm</location>
    </subcellularLocation>
</comment>
<comment type="similarity">
    <text evidence="1">Belongs to the CoaE family.</text>
</comment>
<keyword id="KW-0067">ATP-binding</keyword>
<keyword id="KW-0173">Coenzyme A biosynthesis</keyword>
<keyword id="KW-0963">Cytoplasm</keyword>
<keyword id="KW-0418">Kinase</keyword>
<keyword id="KW-0547">Nucleotide-binding</keyword>
<keyword id="KW-1185">Reference proteome</keyword>
<keyword id="KW-0808">Transferase</keyword>